<accession>Q58779</accession>
<proteinExistence type="inferred from homology"/>
<reference key="1">
    <citation type="journal article" date="1996" name="Science">
        <title>Complete genome sequence of the methanogenic archaeon, Methanococcus jannaschii.</title>
        <authorList>
            <person name="Bult C.J."/>
            <person name="White O."/>
            <person name="Olsen G.J."/>
            <person name="Zhou L."/>
            <person name="Fleischmann R.D."/>
            <person name="Sutton G.G."/>
            <person name="Blake J.A."/>
            <person name="FitzGerald L.M."/>
            <person name="Clayton R.A."/>
            <person name="Gocayne J.D."/>
            <person name="Kerlavage A.R."/>
            <person name="Dougherty B.A."/>
            <person name="Tomb J.-F."/>
            <person name="Adams M.D."/>
            <person name="Reich C.I."/>
            <person name="Overbeek R."/>
            <person name="Kirkness E.F."/>
            <person name="Weinstock K.G."/>
            <person name="Merrick J.M."/>
            <person name="Glodek A."/>
            <person name="Scott J.L."/>
            <person name="Geoghagen N.S.M."/>
            <person name="Weidman J.F."/>
            <person name="Fuhrmann J.L."/>
            <person name="Nguyen D."/>
            <person name="Utterback T.R."/>
            <person name="Kelley J.M."/>
            <person name="Peterson J.D."/>
            <person name="Sadow P.W."/>
            <person name="Hanna M.C."/>
            <person name="Cotton M.D."/>
            <person name="Roberts K.M."/>
            <person name="Hurst M.A."/>
            <person name="Kaine B.P."/>
            <person name="Borodovsky M."/>
            <person name="Klenk H.-P."/>
            <person name="Fraser C.M."/>
            <person name="Smith H.O."/>
            <person name="Woese C.R."/>
            <person name="Venter J.C."/>
        </authorList>
    </citation>
    <scope>NUCLEOTIDE SEQUENCE [LARGE SCALE GENOMIC DNA]</scope>
    <source>
        <strain>ATCC 43067 / DSM 2661 / JAL-1 / JCM 10045 / NBRC 100440</strain>
    </source>
</reference>
<protein>
    <recommendedName>
        <fullName>Putative nitroreductase MJ1384</fullName>
        <ecNumber>1.-.-.-</ecNumber>
    </recommendedName>
</protein>
<organism>
    <name type="scientific">Methanocaldococcus jannaschii (strain ATCC 43067 / DSM 2661 / JAL-1 / JCM 10045 / NBRC 100440)</name>
    <name type="common">Methanococcus jannaschii</name>
    <dbReference type="NCBI Taxonomy" id="243232"/>
    <lineage>
        <taxon>Archaea</taxon>
        <taxon>Methanobacteriati</taxon>
        <taxon>Methanobacteriota</taxon>
        <taxon>Methanomada group</taxon>
        <taxon>Methanococci</taxon>
        <taxon>Methanococcales</taxon>
        <taxon>Methanocaldococcaceae</taxon>
        <taxon>Methanocaldococcus</taxon>
    </lineage>
</organism>
<keyword id="KW-0285">Flavoprotein</keyword>
<keyword id="KW-0288">FMN</keyword>
<keyword id="KW-0560">Oxidoreductase</keyword>
<keyword id="KW-1185">Reference proteome</keyword>
<dbReference type="EC" id="1.-.-.-"/>
<dbReference type="EMBL" id="L77117">
    <property type="protein sequence ID" value="AAB99394.1"/>
    <property type="molecule type" value="Genomic_DNA"/>
</dbReference>
<dbReference type="PIR" id="G64472">
    <property type="entry name" value="G64472"/>
</dbReference>
<dbReference type="SMR" id="Q58779"/>
<dbReference type="STRING" id="243232.MJ_1384"/>
<dbReference type="PaxDb" id="243232-MJ_1384"/>
<dbReference type="EnsemblBacteria" id="AAB99394">
    <property type="protein sequence ID" value="AAB99394"/>
    <property type="gene ID" value="MJ_1384"/>
</dbReference>
<dbReference type="KEGG" id="mja:MJ_1384"/>
<dbReference type="eggNOG" id="arCOG00288">
    <property type="taxonomic scope" value="Archaea"/>
</dbReference>
<dbReference type="HOGENOM" id="CLU_059362_3_1_2"/>
<dbReference type="InParanoid" id="Q58779"/>
<dbReference type="PhylomeDB" id="Q58779"/>
<dbReference type="Proteomes" id="UP000000805">
    <property type="component" value="Chromosome"/>
</dbReference>
<dbReference type="GO" id="GO:0016491">
    <property type="term" value="F:oxidoreductase activity"/>
    <property type="evidence" value="ECO:0007669"/>
    <property type="project" value="UniProtKB-KW"/>
</dbReference>
<dbReference type="CDD" id="cd02142">
    <property type="entry name" value="McbC_SagB-like_oxidoreductase"/>
    <property type="match status" value="1"/>
</dbReference>
<dbReference type="Gene3D" id="3.40.109.10">
    <property type="entry name" value="NADH Oxidase"/>
    <property type="match status" value="1"/>
</dbReference>
<dbReference type="InterPro" id="IPR052544">
    <property type="entry name" value="Bacteriocin_Proc_Enz"/>
</dbReference>
<dbReference type="InterPro" id="IPR029479">
    <property type="entry name" value="Nitroreductase"/>
</dbReference>
<dbReference type="InterPro" id="IPR000415">
    <property type="entry name" value="Nitroreductase-like"/>
</dbReference>
<dbReference type="InterPro" id="IPR020051">
    <property type="entry name" value="SagB-type_dehydrogenase"/>
</dbReference>
<dbReference type="NCBIfam" id="TIGR03605">
    <property type="entry name" value="antibiot_sagB"/>
    <property type="match status" value="1"/>
</dbReference>
<dbReference type="PANTHER" id="PTHR43745">
    <property type="entry name" value="NITROREDUCTASE MJ1384-RELATED"/>
    <property type="match status" value="1"/>
</dbReference>
<dbReference type="PANTHER" id="PTHR43745:SF2">
    <property type="entry name" value="NITROREDUCTASE MJ1384-RELATED"/>
    <property type="match status" value="1"/>
</dbReference>
<dbReference type="Pfam" id="PF00881">
    <property type="entry name" value="Nitroreductase"/>
    <property type="match status" value="1"/>
</dbReference>
<dbReference type="SUPFAM" id="SSF55469">
    <property type="entry name" value="FMN-dependent nitroreductase-like"/>
    <property type="match status" value="1"/>
</dbReference>
<sequence>MGDTMEIQLPDIEEIKLEDVLIKRRSVREYCSSPLTLRELSHILFAAYGVTDERGFKTVPSAGATYPLEIYVNVRDVVGVEEGVYKYIPERHSIVRILDEEVGHELALAALKQMFIAIAPIVLIIAANYERTTRVYGDRGFRYVHMEVGHVAQNVYLMATSLGLGTVSVGAFYDNEIREILKIKEYPLLLMPVGRKIE</sequence>
<name>Y1384_METJA</name>
<feature type="chain" id="PRO_0000072720" description="Putative nitroreductase MJ1384">
    <location>
        <begin position="1"/>
        <end position="198"/>
    </location>
</feature>
<gene>
    <name type="ordered locus">MJ1384</name>
</gene>
<comment type="cofactor">
    <cofactor evidence="1">
        <name>FMN</name>
        <dbReference type="ChEBI" id="CHEBI:58210"/>
    </cofactor>
</comment>
<comment type="similarity">
    <text evidence="1">Belongs to the nitroreductase family.</text>
</comment>
<evidence type="ECO:0000305" key="1"/>